<sequence length="505" mass="55261">MSQIIGHISQVIGPVVDVYFEGTESDLILPSIHDALEIKRHNGKKLIVEVQQHIGENTVRTVAMDSTDGLQRGMKVFPTGGPITMPVGEQIKGRLMNVVGDSIDGMKELNRDGAYSIHRDPPKFEDLTTVQEVLFTGIKVIDLLEPYSKGGKIGLFGGAGVGKTVLIMELINNIAKKHNGFSVFAGVGERTREGNDLLREMIESGVIRYGEAFKESMEKGHWDLSKVDYNEVEKSQATLVFGQMNEPPGARASVALSGLTVAESFRDMGAKSGARDILFFIDNIFRFTQAGSEVSALLGRMPSAVGYQPTLATEMGAMQERITSTKTGSITSVQAVYVPADDLTDPAPATTFTHLDATTVLSRKITELGIYPAVDPLESTSRILDPHIVGQEHYDVAQRVKQILQRNKELQDIISILGMEELSDADRLVVNRARRVQRFLSQPFTVAEQFTGVPGAMVAIEDTIKGFKMILDGEVDYLPEPAFLNVGTIEEAIEKGKKLLEQANK</sequence>
<gene>
    <name evidence="1" type="primary">atpD</name>
    <name type="ordered locus">BF2227</name>
</gene>
<protein>
    <recommendedName>
        <fullName evidence="1">ATP synthase subunit beta</fullName>
        <ecNumber evidence="1">7.1.2.2</ecNumber>
    </recommendedName>
    <alternativeName>
        <fullName evidence="1">ATP synthase F1 sector subunit beta</fullName>
    </alternativeName>
    <alternativeName>
        <fullName evidence="1">F-ATPase subunit beta</fullName>
    </alternativeName>
</protein>
<name>ATPB_BACFN</name>
<feature type="chain" id="PRO_0000254212" description="ATP synthase subunit beta">
    <location>
        <begin position="1"/>
        <end position="505"/>
    </location>
</feature>
<feature type="binding site" evidence="1">
    <location>
        <begin position="157"/>
        <end position="164"/>
    </location>
    <ligand>
        <name>ATP</name>
        <dbReference type="ChEBI" id="CHEBI:30616"/>
    </ligand>
</feature>
<accession>Q5LD89</accession>
<organism>
    <name type="scientific">Bacteroides fragilis (strain ATCC 25285 / DSM 2151 / CCUG 4856 / JCM 11019 / LMG 10263 / NCTC 9343 / Onslow / VPI 2553 / EN-2)</name>
    <dbReference type="NCBI Taxonomy" id="272559"/>
    <lineage>
        <taxon>Bacteria</taxon>
        <taxon>Pseudomonadati</taxon>
        <taxon>Bacteroidota</taxon>
        <taxon>Bacteroidia</taxon>
        <taxon>Bacteroidales</taxon>
        <taxon>Bacteroidaceae</taxon>
        <taxon>Bacteroides</taxon>
    </lineage>
</organism>
<comment type="function">
    <text evidence="1">Produces ATP from ADP in the presence of a proton gradient across the membrane. The catalytic sites are hosted primarily by the beta subunits.</text>
</comment>
<comment type="catalytic activity">
    <reaction evidence="1">
        <text>ATP + H2O + 4 H(+)(in) = ADP + phosphate + 5 H(+)(out)</text>
        <dbReference type="Rhea" id="RHEA:57720"/>
        <dbReference type="ChEBI" id="CHEBI:15377"/>
        <dbReference type="ChEBI" id="CHEBI:15378"/>
        <dbReference type="ChEBI" id="CHEBI:30616"/>
        <dbReference type="ChEBI" id="CHEBI:43474"/>
        <dbReference type="ChEBI" id="CHEBI:456216"/>
        <dbReference type="EC" id="7.1.2.2"/>
    </reaction>
</comment>
<comment type="subunit">
    <text evidence="1">F-type ATPases have 2 components, CF(1) - the catalytic core - and CF(0) - the membrane proton channel. CF(1) has five subunits: alpha(3), beta(3), gamma(1), delta(1), epsilon(1). CF(0) has three main subunits: a(1), b(2) and c(9-12). The alpha and beta chains form an alternating ring which encloses part of the gamma chain. CF(1) is attached to CF(0) by a central stalk formed by the gamma and epsilon chains, while a peripheral stalk is formed by the delta and b chains.</text>
</comment>
<comment type="subcellular location">
    <subcellularLocation>
        <location evidence="1">Cell inner membrane</location>
        <topology evidence="1">Peripheral membrane protein</topology>
    </subcellularLocation>
</comment>
<comment type="similarity">
    <text evidence="1">Belongs to the ATPase alpha/beta chains family.</text>
</comment>
<evidence type="ECO:0000255" key="1">
    <source>
        <dbReference type="HAMAP-Rule" id="MF_01347"/>
    </source>
</evidence>
<keyword id="KW-0066">ATP synthesis</keyword>
<keyword id="KW-0067">ATP-binding</keyword>
<keyword id="KW-0997">Cell inner membrane</keyword>
<keyword id="KW-1003">Cell membrane</keyword>
<keyword id="KW-0139">CF(1)</keyword>
<keyword id="KW-0375">Hydrogen ion transport</keyword>
<keyword id="KW-0406">Ion transport</keyword>
<keyword id="KW-0472">Membrane</keyword>
<keyword id="KW-0547">Nucleotide-binding</keyword>
<keyword id="KW-1278">Translocase</keyword>
<keyword id="KW-0813">Transport</keyword>
<dbReference type="EC" id="7.1.2.2" evidence="1"/>
<dbReference type="EMBL" id="CR626927">
    <property type="protein sequence ID" value="CAH07921.1"/>
    <property type="molecule type" value="Genomic_DNA"/>
</dbReference>
<dbReference type="RefSeq" id="WP_005787476.1">
    <property type="nucleotide sequence ID" value="NZ_UFTH01000001.1"/>
</dbReference>
<dbReference type="SMR" id="Q5LD89"/>
<dbReference type="PaxDb" id="272559-BF9343_2140"/>
<dbReference type="GeneID" id="60369781"/>
<dbReference type="KEGG" id="bfs:BF9343_2140"/>
<dbReference type="eggNOG" id="COG0055">
    <property type="taxonomic scope" value="Bacteria"/>
</dbReference>
<dbReference type="HOGENOM" id="CLU_022398_0_2_10"/>
<dbReference type="Proteomes" id="UP000006731">
    <property type="component" value="Chromosome"/>
</dbReference>
<dbReference type="GO" id="GO:0005886">
    <property type="term" value="C:plasma membrane"/>
    <property type="evidence" value="ECO:0007669"/>
    <property type="project" value="UniProtKB-SubCell"/>
</dbReference>
<dbReference type="GO" id="GO:0045259">
    <property type="term" value="C:proton-transporting ATP synthase complex"/>
    <property type="evidence" value="ECO:0007669"/>
    <property type="project" value="UniProtKB-KW"/>
</dbReference>
<dbReference type="GO" id="GO:0005524">
    <property type="term" value="F:ATP binding"/>
    <property type="evidence" value="ECO:0007669"/>
    <property type="project" value="UniProtKB-UniRule"/>
</dbReference>
<dbReference type="GO" id="GO:0016887">
    <property type="term" value="F:ATP hydrolysis activity"/>
    <property type="evidence" value="ECO:0007669"/>
    <property type="project" value="InterPro"/>
</dbReference>
<dbReference type="GO" id="GO:0046933">
    <property type="term" value="F:proton-transporting ATP synthase activity, rotational mechanism"/>
    <property type="evidence" value="ECO:0007669"/>
    <property type="project" value="UniProtKB-UniRule"/>
</dbReference>
<dbReference type="CDD" id="cd18110">
    <property type="entry name" value="ATP-synt_F1_beta_C"/>
    <property type="match status" value="1"/>
</dbReference>
<dbReference type="CDD" id="cd18115">
    <property type="entry name" value="ATP-synt_F1_beta_N"/>
    <property type="match status" value="1"/>
</dbReference>
<dbReference type="CDD" id="cd01133">
    <property type="entry name" value="F1-ATPase_beta_CD"/>
    <property type="match status" value="1"/>
</dbReference>
<dbReference type="FunFam" id="1.10.1140.10:FF:000001">
    <property type="entry name" value="ATP synthase subunit beta"/>
    <property type="match status" value="1"/>
</dbReference>
<dbReference type="FunFam" id="2.40.10.170:FF:000011">
    <property type="entry name" value="ATP synthase subunit beta"/>
    <property type="match status" value="1"/>
</dbReference>
<dbReference type="FunFam" id="3.40.50.300:FF:000004">
    <property type="entry name" value="ATP synthase subunit beta"/>
    <property type="match status" value="1"/>
</dbReference>
<dbReference type="Gene3D" id="2.40.10.170">
    <property type="match status" value="1"/>
</dbReference>
<dbReference type="Gene3D" id="1.10.1140.10">
    <property type="entry name" value="Bovine Mitochondrial F1-atpase, Atp Synthase Beta Chain, Chain D, domain 3"/>
    <property type="match status" value="1"/>
</dbReference>
<dbReference type="Gene3D" id="3.40.50.300">
    <property type="entry name" value="P-loop containing nucleotide triphosphate hydrolases"/>
    <property type="match status" value="1"/>
</dbReference>
<dbReference type="HAMAP" id="MF_01347">
    <property type="entry name" value="ATP_synth_beta_bact"/>
    <property type="match status" value="1"/>
</dbReference>
<dbReference type="InterPro" id="IPR003593">
    <property type="entry name" value="AAA+_ATPase"/>
</dbReference>
<dbReference type="InterPro" id="IPR055190">
    <property type="entry name" value="ATP-synt_VA_C"/>
</dbReference>
<dbReference type="InterPro" id="IPR005722">
    <property type="entry name" value="ATP_synth_F1_bsu"/>
</dbReference>
<dbReference type="InterPro" id="IPR020003">
    <property type="entry name" value="ATPase_a/bsu_AS"/>
</dbReference>
<dbReference type="InterPro" id="IPR050053">
    <property type="entry name" value="ATPase_alpha/beta_chains"/>
</dbReference>
<dbReference type="InterPro" id="IPR004100">
    <property type="entry name" value="ATPase_F1/V1/A1_a/bsu_N"/>
</dbReference>
<dbReference type="InterPro" id="IPR036121">
    <property type="entry name" value="ATPase_F1/V1/A1_a/bsu_N_sf"/>
</dbReference>
<dbReference type="InterPro" id="IPR000194">
    <property type="entry name" value="ATPase_F1/V1/A1_a/bsu_nucl-bd"/>
</dbReference>
<dbReference type="InterPro" id="IPR024034">
    <property type="entry name" value="ATPase_F1/V1_b/a_C"/>
</dbReference>
<dbReference type="InterPro" id="IPR027417">
    <property type="entry name" value="P-loop_NTPase"/>
</dbReference>
<dbReference type="NCBIfam" id="TIGR01039">
    <property type="entry name" value="atpD"/>
    <property type="match status" value="1"/>
</dbReference>
<dbReference type="PANTHER" id="PTHR15184">
    <property type="entry name" value="ATP SYNTHASE"/>
    <property type="match status" value="1"/>
</dbReference>
<dbReference type="PANTHER" id="PTHR15184:SF71">
    <property type="entry name" value="ATP SYNTHASE SUBUNIT BETA, MITOCHONDRIAL"/>
    <property type="match status" value="1"/>
</dbReference>
<dbReference type="Pfam" id="PF00006">
    <property type="entry name" value="ATP-synt_ab"/>
    <property type="match status" value="1"/>
</dbReference>
<dbReference type="Pfam" id="PF02874">
    <property type="entry name" value="ATP-synt_ab_N"/>
    <property type="match status" value="1"/>
</dbReference>
<dbReference type="Pfam" id="PF22919">
    <property type="entry name" value="ATP-synt_VA_C"/>
    <property type="match status" value="1"/>
</dbReference>
<dbReference type="SMART" id="SM00382">
    <property type="entry name" value="AAA"/>
    <property type="match status" value="1"/>
</dbReference>
<dbReference type="SUPFAM" id="SSF47917">
    <property type="entry name" value="C-terminal domain of alpha and beta subunits of F1 ATP synthase"/>
    <property type="match status" value="1"/>
</dbReference>
<dbReference type="SUPFAM" id="SSF50615">
    <property type="entry name" value="N-terminal domain of alpha and beta subunits of F1 ATP synthase"/>
    <property type="match status" value="1"/>
</dbReference>
<dbReference type="SUPFAM" id="SSF52540">
    <property type="entry name" value="P-loop containing nucleoside triphosphate hydrolases"/>
    <property type="match status" value="1"/>
</dbReference>
<dbReference type="PROSITE" id="PS00152">
    <property type="entry name" value="ATPASE_ALPHA_BETA"/>
    <property type="match status" value="1"/>
</dbReference>
<reference key="1">
    <citation type="journal article" date="2005" name="Science">
        <title>Extensive DNA inversions in the B. fragilis genome control variable gene expression.</title>
        <authorList>
            <person name="Cerdeno-Tarraga A.-M."/>
            <person name="Patrick S."/>
            <person name="Crossman L.C."/>
            <person name="Blakely G."/>
            <person name="Abratt V."/>
            <person name="Lennard N."/>
            <person name="Poxton I."/>
            <person name="Duerden B."/>
            <person name="Harris B."/>
            <person name="Quail M.A."/>
            <person name="Barron A."/>
            <person name="Clark L."/>
            <person name="Corton C."/>
            <person name="Doggett J."/>
            <person name="Holden M.T.G."/>
            <person name="Larke N."/>
            <person name="Line A."/>
            <person name="Lord A."/>
            <person name="Norbertczak H."/>
            <person name="Ormond D."/>
            <person name="Price C."/>
            <person name="Rabbinowitsch E."/>
            <person name="Woodward J."/>
            <person name="Barrell B.G."/>
            <person name="Parkhill J."/>
        </authorList>
    </citation>
    <scope>NUCLEOTIDE SEQUENCE [LARGE SCALE GENOMIC DNA]</scope>
    <source>
        <strain>ATCC 25285 / DSM 2151 / CCUG 4856 / JCM 11019 / LMG 10263 / NCTC 9343 / Onslow / VPI 2553 / EN-2</strain>
    </source>
</reference>
<proteinExistence type="inferred from homology"/>